<dbReference type="EC" id="1.-.-.-" evidence="1"/>
<dbReference type="EMBL" id="AE008922">
    <property type="protein sequence ID" value="AAM42875.1"/>
    <property type="molecule type" value="Genomic_DNA"/>
</dbReference>
<dbReference type="RefSeq" id="NP_638951.1">
    <property type="nucleotide sequence ID" value="NC_003902.1"/>
</dbReference>
<dbReference type="RefSeq" id="WP_011038689.1">
    <property type="nucleotide sequence ID" value="NC_003902.1"/>
</dbReference>
<dbReference type="SMR" id="Q8P4V1"/>
<dbReference type="STRING" id="190485.XCC3605"/>
<dbReference type="EnsemblBacteria" id="AAM42875">
    <property type="protein sequence ID" value="AAM42875"/>
    <property type="gene ID" value="XCC3605"/>
</dbReference>
<dbReference type="KEGG" id="xcc:XCC3605"/>
<dbReference type="PATRIC" id="fig|190485.4.peg.3862"/>
<dbReference type="eggNOG" id="COG0778">
    <property type="taxonomic scope" value="Bacteria"/>
</dbReference>
<dbReference type="HOGENOM" id="CLU_084441_0_0_6"/>
<dbReference type="OrthoDB" id="9784375at2"/>
<dbReference type="Proteomes" id="UP000001010">
    <property type="component" value="Chromosome"/>
</dbReference>
<dbReference type="GO" id="GO:0016491">
    <property type="term" value="F:oxidoreductase activity"/>
    <property type="evidence" value="ECO:0007669"/>
    <property type="project" value="UniProtKB-UniRule"/>
</dbReference>
<dbReference type="CDD" id="cd02148">
    <property type="entry name" value="RutE-like"/>
    <property type="match status" value="1"/>
</dbReference>
<dbReference type="Gene3D" id="3.40.109.10">
    <property type="entry name" value="NADH Oxidase"/>
    <property type="match status" value="1"/>
</dbReference>
<dbReference type="HAMAP" id="MF_01204">
    <property type="entry name" value="Oxidoreductase_RutE_HadB"/>
    <property type="match status" value="1"/>
</dbReference>
<dbReference type="InterPro" id="IPR029479">
    <property type="entry name" value="Nitroreductase"/>
</dbReference>
<dbReference type="InterPro" id="IPR000415">
    <property type="entry name" value="Nitroreductase-like"/>
</dbReference>
<dbReference type="InterPro" id="IPR050461">
    <property type="entry name" value="Nitroreductase_HadB/RutE"/>
</dbReference>
<dbReference type="InterPro" id="IPR023936">
    <property type="entry name" value="RutE-like"/>
</dbReference>
<dbReference type="NCBIfam" id="NF003768">
    <property type="entry name" value="PRK05365.1"/>
    <property type="match status" value="1"/>
</dbReference>
<dbReference type="PANTHER" id="PTHR43543">
    <property type="entry name" value="MALONIC SEMIALDEHYDE REDUCTASE RUTE-RELATED"/>
    <property type="match status" value="1"/>
</dbReference>
<dbReference type="PANTHER" id="PTHR43543:SF1">
    <property type="entry name" value="MALONIC SEMIALDEHYDE REDUCTASE RUTE-RELATED"/>
    <property type="match status" value="1"/>
</dbReference>
<dbReference type="Pfam" id="PF00881">
    <property type="entry name" value="Nitroreductase"/>
    <property type="match status" value="1"/>
</dbReference>
<dbReference type="SUPFAM" id="SSF55469">
    <property type="entry name" value="FMN-dependent nitroreductase-like"/>
    <property type="match status" value="1"/>
</dbReference>
<gene>
    <name type="ordered locus">XCC3605</name>
</gene>
<evidence type="ECO:0000255" key="1">
    <source>
        <dbReference type="HAMAP-Rule" id="MF_01204"/>
    </source>
</evidence>
<keyword id="KW-0285">Flavoprotein</keyword>
<keyword id="KW-0288">FMN</keyword>
<keyword id="KW-0520">NAD</keyword>
<keyword id="KW-0521">NADP</keyword>
<keyword id="KW-0560">Oxidoreductase</keyword>
<keyword id="KW-1185">Reference proteome</keyword>
<comment type="cofactor">
    <cofactor evidence="1">
        <name>FMN</name>
        <dbReference type="ChEBI" id="CHEBI:58210"/>
    </cofactor>
</comment>
<comment type="similarity">
    <text evidence="1">Belongs to the nitroreductase family. HadB/RutE subfamily.</text>
</comment>
<reference key="1">
    <citation type="journal article" date="2002" name="Nature">
        <title>Comparison of the genomes of two Xanthomonas pathogens with differing host specificities.</title>
        <authorList>
            <person name="da Silva A.C.R."/>
            <person name="Ferro J.A."/>
            <person name="Reinach F.C."/>
            <person name="Farah C.S."/>
            <person name="Furlan L.R."/>
            <person name="Quaggio R.B."/>
            <person name="Monteiro-Vitorello C.B."/>
            <person name="Van Sluys M.A."/>
            <person name="Almeida N.F. Jr."/>
            <person name="Alves L.M.C."/>
            <person name="do Amaral A.M."/>
            <person name="Bertolini M.C."/>
            <person name="Camargo L.E.A."/>
            <person name="Camarotte G."/>
            <person name="Cannavan F."/>
            <person name="Cardozo J."/>
            <person name="Chambergo F."/>
            <person name="Ciapina L.P."/>
            <person name="Cicarelli R.M.B."/>
            <person name="Coutinho L.L."/>
            <person name="Cursino-Santos J.R."/>
            <person name="El-Dorry H."/>
            <person name="Faria J.B."/>
            <person name="Ferreira A.J.S."/>
            <person name="Ferreira R.C.C."/>
            <person name="Ferro M.I.T."/>
            <person name="Formighieri E.F."/>
            <person name="Franco M.C."/>
            <person name="Greggio C.C."/>
            <person name="Gruber A."/>
            <person name="Katsuyama A.M."/>
            <person name="Kishi L.T."/>
            <person name="Leite R.P."/>
            <person name="Lemos E.G.M."/>
            <person name="Lemos M.V.F."/>
            <person name="Locali E.C."/>
            <person name="Machado M.A."/>
            <person name="Madeira A.M.B.N."/>
            <person name="Martinez-Rossi N.M."/>
            <person name="Martins E.C."/>
            <person name="Meidanis J."/>
            <person name="Menck C.F.M."/>
            <person name="Miyaki C.Y."/>
            <person name="Moon D.H."/>
            <person name="Moreira L.M."/>
            <person name="Novo M.T.M."/>
            <person name="Okura V.K."/>
            <person name="Oliveira M.C."/>
            <person name="Oliveira V.R."/>
            <person name="Pereira H.A."/>
            <person name="Rossi A."/>
            <person name="Sena J.A.D."/>
            <person name="Silva C."/>
            <person name="de Souza R.F."/>
            <person name="Spinola L.A.F."/>
            <person name="Takita M.A."/>
            <person name="Tamura R.E."/>
            <person name="Teixeira E.C."/>
            <person name="Tezza R.I.D."/>
            <person name="Trindade dos Santos M."/>
            <person name="Truffi D."/>
            <person name="Tsai S.M."/>
            <person name="White F.F."/>
            <person name="Setubal J.C."/>
            <person name="Kitajima J.P."/>
        </authorList>
    </citation>
    <scope>NUCLEOTIDE SEQUENCE [LARGE SCALE GENOMIC DNA]</scope>
    <source>
        <strain>ATCC 33913 / DSM 3586 / NCPPB 528 / LMG 568 / P 25</strain>
    </source>
</reference>
<organism>
    <name type="scientific">Xanthomonas campestris pv. campestris (strain ATCC 33913 / DSM 3586 / NCPPB 528 / LMG 568 / P 25)</name>
    <dbReference type="NCBI Taxonomy" id="190485"/>
    <lineage>
        <taxon>Bacteria</taxon>
        <taxon>Pseudomonadati</taxon>
        <taxon>Pseudomonadota</taxon>
        <taxon>Gammaproteobacteria</taxon>
        <taxon>Lysobacterales</taxon>
        <taxon>Lysobacteraceae</taxon>
        <taxon>Xanthomonas</taxon>
    </lineage>
</organism>
<name>Y3605_XANCP</name>
<proteinExistence type="inferred from homology"/>
<sequence length="196" mass="21111">MSDLLNAAALDQLFRTARTQNAFLDTPVSEDLLRELYDLVKWGPTAANGSPARFVFVTTAEGKEKLKPALSEGNAAKTLAAPVTAIIGFDEDFHEKLPYLFPHADAKSWFDGPRTARTESAFRNSSLQGAYLILAARALGLDAGPMSGFDNAKVDAAFFAGTPIKSNFLVNLGYGDPAGLFPRLPRLSFDEAARIA</sequence>
<feature type="chain" id="PRO_0000072735" description="Putative NADH dehydrogenase/NAD(P)H nitroreductase XCC3605">
    <location>
        <begin position="1"/>
        <end position="196"/>
    </location>
</feature>
<protein>
    <recommendedName>
        <fullName evidence="1">Putative NADH dehydrogenase/NAD(P)H nitroreductase XCC3605</fullName>
        <ecNumber evidence="1">1.-.-.-</ecNumber>
    </recommendedName>
</protein>
<accession>Q8P4V1</accession>